<keyword id="KW-0426">Late protein</keyword>
<keyword id="KW-0663">Pyridoxal phosphate</keyword>
<keyword id="KW-1185">Reference proteome</keyword>
<keyword id="KW-0946">Virion</keyword>
<feature type="chain" id="PRO_0000373143" description="NifS-like protein">
    <location>
        <begin position="1"/>
        <end position="383"/>
    </location>
</feature>
<feature type="binding site" evidence="1">
    <location>
        <begin position="58"/>
        <end position="59"/>
    </location>
    <ligand>
        <name>pyridoxal 5'-phosphate</name>
        <dbReference type="ChEBI" id="CHEBI:597326"/>
    </ligand>
</feature>
<feature type="binding site" evidence="1">
    <location>
        <begin position="184"/>
        <end position="186"/>
    </location>
    <ligand>
        <name>pyridoxal 5'-phosphate</name>
        <dbReference type="ChEBI" id="CHEBI:597326"/>
    </ligand>
</feature>
<reference key="1">
    <citation type="journal article" date="1995" name="Virology">
        <title>Analysis of the complete nucleotide sequence of African swine fever virus.</title>
        <authorList>
            <person name="Yanez R.J."/>
            <person name="Rodriguez J.M."/>
            <person name="Nogal M.L."/>
            <person name="Yuste L."/>
            <person name="Enriquez C."/>
            <person name="Rodriguez J.F."/>
            <person name="Vinuela E."/>
        </authorList>
    </citation>
    <scope>NUCLEOTIDE SEQUENCE [LARGE SCALE GENOMIC DNA]</scope>
</reference>
<reference key="2">
    <citation type="journal article" date="2018" name="J. Virol.">
        <title>A Proteomic Atlas of the African Swine Fever Virus Particle.</title>
        <authorList>
            <person name="Alejo A."/>
            <person name="Matamoros T."/>
            <person name="Guerra M."/>
            <person name="Andres G."/>
        </authorList>
    </citation>
    <scope>SUBCELLULAR LOCATION</scope>
</reference>
<reference key="3">
    <citation type="journal article" date="2020" name="J. Virol.">
        <title>The African Swine Fever Virus Transcriptome.</title>
        <authorList>
            <person name="Cackett G."/>
            <person name="Matelska D."/>
            <person name="Sykora M."/>
            <person name="Portugal R."/>
            <person name="Malecki M."/>
            <person name="Baehler J."/>
            <person name="Dixon L."/>
            <person name="Werner F."/>
        </authorList>
    </citation>
    <scope>INDUCTION</scope>
</reference>
<organism>
    <name type="scientific">African swine fever virus (strain Badajoz 1971 Vero-adapted)</name>
    <name type="common">Ba71V</name>
    <name type="synonym">ASFV</name>
    <dbReference type="NCBI Taxonomy" id="10498"/>
    <lineage>
        <taxon>Viruses</taxon>
        <taxon>Varidnaviria</taxon>
        <taxon>Bamfordvirae</taxon>
        <taxon>Nucleocytoviricota</taxon>
        <taxon>Pokkesviricetes</taxon>
        <taxon>Asfuvirales</taxon>
        <taxon>Asfarviridae</taxon>
        <taxon>Asfivirus</taxon>
        <taxon>African swine fever virus</taxon>
    </lineage>
</organism>
<proteinExistence type="evidence at transcript level"/>
<dbReference type="EMBL" id="U18466">
    <property type="protein sequence ID" value="AAA65352.1"/>
    <property type="molecule type" value="Genomic_DNA"/>
</dbReference>
<dbReference type="RefSeq" id="NP_042816.1">
    <property type="nucleotide sequence ID" value="NC_001659.2"/>
</dbReference>
<dbReference type="SMR" id="Q65192"/>
<dbReference type="GeneID" id="22220353"/>
<dbReference type="KEGG" id="vg:22220353"/>
<dbReference type="Proteomes" id="UP000000624">
    <property type="component" value="Segment"/>
</dbReference>
<dbReference type="GO" id="GO:0044423">
    <property type="term" value="C:virion component"/>
    <property type="evidence" value="ECO:0007669"/>
    <property type="project" value="UniProtKB-KW"/>
</dbReference>
<dbReference type="Gene3D" id="3.40.640.10">
    <property type="entry name" value="Type I PLP-dependent aspartate aminotransferase-like (Major domain)"/>
    <property type="match status" value="1"/>
</dbReference>
<dbReference type="InterPro" id="IPR000192">
    <property type="entry name" value="Aminotrans_V_dom"/>
</dbReference>
<dbReference type="InterPro" id="IPR015424">
    <property type="entry name" value="PyrdxlP-dep_Trfase"/>
</dbReference>
<dbReference type="InterPro" id="IPR015421">
    <property type="entry name" value="PyrdxlP-dep_Trfase_major"/>
</dbReference>
<dbReference type="PANTHER" id="PTHR11601:SF34">
    <property type="entry name" value="CYSTEINE DESULFURASE"/>
    <property type="match status" value="1"/>
</dbReference>
<dbReference type="PANTHER" id="PTHR11601">
    <property type="entry name" value="CYSTEINE DESULFURYLASE FAMILY MEMBER"/>
    <property type="match status" value="1"/>
</dbReference>
<dbReference type="Pfam" id="PF00266">
    <property type="entry name" value="Aminotran_5"/>
    <property type="match status" value="1"/>
</dbReference>
<dbReference type="SUPFAM" id="SSF53383">
    <property type="entry name" value="PLP-dependent transferases"/>
    <property type="match status" value="1"/>
</dbReference>
<protein>
    <recommendedName>
        <fullName>NifS-like protein</fullName>
    </recommendedName>
</protein>
<organismHost>
    <name type="scientific">Ornithodoros</name>
    <name type="common">relapsing fever ticks</name>
    <dbReference type="NCBI Taxonomy" id="6937"/>
</organismHost>
<organismHost>
    <name type="scientific">Sus scrofa</name>
    <name type="common">Pig</name>
    <dbReference type="NCBI Taxonomy" id="9823"/>
</organismHost>
<sequence>MASILALDGLYAEVPKFLPEALREGCAGKNPLSFYIQQILNLMGCDGNEYHVLFTGSSEEANTHMIMAAVRRHLLRTQQRPHVIIGAAEPPSVTECVKALAQEKRCVYTIIPLKNFEIDPVAVYDAIQSNTCLACISGTNAVVKTFNKLQDISKVLKGIPLHSEVSELVYQGCIKQNPPADSFSINSLYGFLGVGVLGMKKKVMQGLGPLIFGGGLRGGSPNIPGIHAMYRTLTQQRPSMKKINTIHKLFMKTLKKHQHVYLPIGGVSAEDTSAENISTKDIPVEGPKELPGYILFSVGRRAEELQKKIFTKFNIKVGRIVDLQEILFRIKIPQKYWETLLFIQLRDNLTKEDIKRVMVVLMHLDTITPRGSLPPPSYSSSFS</sequence>
<gene>
    <name type="ordered locus">Ba71V-124</name>
    <name type="ORF">QP383R</name>
</gene>
<evidence type="ECO:0000250" key="1">
    <source>
        <dbReference type="UniProtKB" id="P0A6B9"/>
    </source>
</evidence>
<evidence type="ECO:0000269" key="2">
    <source>
    </source>
</evidence>
<evidence type="ECO:0000269" key="3">
    <source>
    </source>
</evidence>
<evidence type="ECO:0000305" key="4"/>
<comment type="cofactor">
    <cofactor evidence="1">
        <name>pyridoxal 5'-phosphate</name>
        <dbReference type="ChEBI" id="CHEBI:597326"/>
    </cofactor>
</comment>
<comment type="subcellular location">
    <subcellularLocation>
        <location evidence="2">Virion</location>
    </subcellularLocation>
</comment>
<comment type="induction">
    <text evidence="3">Expressed in the late phase of the viral replicative cycle.</text>
</comment>
<comment type="similarity">
    <text evidence="4">Belongs to the class-V pyridoxal-phosphate-dependent aminotransferase family. NifS/IscS subfamily.</text>
</comment>
<comment type="caution">
    <text evidence="4">Although related to the NifS/IscS subfamily, lacks the conserved active site, suggesting it has no transferase activity.</text>
</comment>
<name>NIFSL_ASFB7</name>
<accession>Q65192</accession>